<feature type="chain" id="PRO_1000126403" description="Small ribosomal subunit protein bS20">
    <location>
        <begin position="1"/>
        <end position="86"/>
    </location>
</feature>
<evidence type="ECO:0000255" key="1">
    <source>
        <dbReference type="HAMAP-Rule" id="MF_00500"/>
    </source>
</evidence>
<evidence type="ECO:0000305" key="2"/>
<name>RS20_BIFLD</name>
<reference key="1">
    <citation type="journal article" date="2008" name="BMC Genomics">
        <title>Comparative genomic analysis of the gut bacterium Bifidobacterium longum reveals loci susceptible to deletion during pure culture growth.</title>
        <authorList>
            <person name="Lee J.H."/>
            <person name="Karamychev V.N."/>
            <person name="Kozyavkin S.A."/>
            <person name="Mills D."/>
            <person name="Pavlov A.R."/>
            <person name="Pavlova N.V."/>
            <person name="Polouchine N.N."/>
            <person name="Richardson P.M."/>
            <person name="Shakhova V.V."/>
            <person name="Slesarev A.I."/>
            <person name="Weimer B."/>
            <person name="O'Sullivan D.J."/>
        </authorList>
    </citation>
    <scope>NUCLEOTIDE SEQUENCE [LARGE SCALE GENOMIC DNA]</scope>
    <source>
        <strain>DJO10A</strain>
    </source>
</reference>
<organism>
    <name type="scientific">Bifidobacterium longum (strain DJO10A)</name>
    <dbReference type="NCBI Taxonomy" id="205913"/>
    <lineage>
        <taxon>Bacteria</taxon>
        <taxon>Bacillati</taxon>
        <taxon>Actinomycetota</taxon>
        <taxon>Actinomycetes</taxon>
        <taxon>Bifidobacteriales</taxon>
        <taxon>Bifidobacteriaceae</taxon>
        <taxon>Bifidobacterium</taxon>
    </lineage>
</organism>
<dbReference type="EMBL" id="CP000605">
    <property type="protein sequence ID" value="ACD98029.1"/>
    <property type="molecule type" value="Genomic_DNA"/>
</dbReference>
<dbReference type="RefSeq" id="WP_007052167.1">
    <property type="nucleotide sequence ID" value="NZ_AABM02000001.1"/>
</dbReference>
<dbReference type="SMR" id="B3DSB0"/>
<dbReference type="GeneID" id="69578011"/>
<dbReference type="KEGG" id="blj:BLD_0583"/>
<dbReference type="HOGENOM" id="CLU_160655_0_1_11"/>
<dbReference type="Proteomes" id="UP000002419">
    <property type="component" value="Chromosome"/>
</dbReference>
<dbReference type="GO" id="GO:0005829">
    <property type="term" value="C:cytosol"/>
    <property type="evidence" value="ECO:0007669"/>
    <property type="project" value="TreeGrafter"/>
</dbReference>
<dbReference type="GO" id="GO:0015935">
    <property type="term" value="C:small ribosomal subunit"/>
    <property type="evidence" value="ECO:0007669"/>
    <property type="project" value="TreeGrafter"/>
</dbReference>
<dbReference type="GO" id="GO:0070181">
    <property type="term" value="F:small ribosomal subunit rRNA binding"/>
    <property type="evidence" value="ECO:0007669"/>
    <property type="project" value="TreeGrafter"/>
</dbReference>
<dbReference type="GO" id="GO:0003735">
    <property type="term" value="F:structural constituent of ribosome"/>
    <property type="evidence" value="ECO:0007669"/>
    <property type="project" value="InterPro"/>
</dbReference>
<dbReference type="GO" id="GO:0006412">
    <property type="term" value="P:translation"/>
    <property type="evidence" value="ECO:0007669"/>
    <property type="project" value="UniProtKB-UniRule"/>
</dbReference>
<dbReference type="FunFam" id="1.20.58.110:FF:000001">
    <property type="entry name" value="30S ribosomal protein S20"/>
    <property type="match status" value="1"/>
</dbReference>
<dbReference type="Gene3D" id="1.20.58.110">
    <property type="entry name" value="Ribosomal protein S20"/>
    <property type="match status" value="1"/>
</dbReference>
<dbReference type="HAMAP" id="MF_00500">
    <property type="entry name" value="Ribosomal_bS20"/>
    <property type="match status" value="1"/>
</dbReference>
<dbReference type="InterPro" id="IPR002583">
    <property type="entry name" value="Ribosomal_bS20"/>
</dbReference>
<dbReference type="InterPro" id="IPR036510">
    <property type="entry name" value="Ribosomal_bS20_sf"/>
</dbReference>
<dbReference type="NCBIfam" id="TIGR00029">
    <property type="entry name" value="S20"/>
    <property type="match status" value="1"/>
</dbReference>
<dbReference type="PANTHER" id="PTHR33398">
    <property type="entry name" value="30S RIBOSOMAL PROTEIN S20"/>
    <property type="match status" value="1"/>
</dbReference>
<dbReference type="PANTHER" id="PTHR33398:SF1">
    <property type="entry name" value="SMALL RIBOSOMAL SUBUNIT PROTEIN BS20C"/>
    <property type="match status" value="1"/>
</dbReference>
<dbReference type="Pfam" id="PF01649">
    <property type="entry name" value="Ribosomal_S20p"/>
    <property type="match status" value="1"/>
</dbReference>
<dbReference type="SUPFAM" id="SSF46992">
    <property type="entry name" value="Ribosomal protein S20"/>
    <property type="match status" value="1"/>
</dbReference>
<keyword id="KW-0687">Ribonucleoprotein</keyword>
<keyword id="KW-0689">Ribosomal protein</keyword>
<keyword id="KW-0694">RNA-binding</keyword>
<keyword id="KW-0699">rRNA-binding</keyword>
<protein>
    <recommendedName>
        <fullName evidence="1">Small ribosomal subunit protein bS20</fullName>
    </recommendedName>
    <alternativeName>
        <fullName evidence="2">30S ribosomal protein S20</fullName>
    </alternativeName>
</protein>
<proteinExistence type="inferred from homology"/>
<sequence length="86" mass="8916">MANIKSQKKRVLTNEKAHLRNVAVKSGLKTAIRATREAIAAGDKAAAEAAYKVAAQKLDKAAGAGVIHKNQAANRKSGLAVAINAL</sequence>
<accession>B3DSB0</accession>
<comment type="function">
    <text evidence="1">Binds directly to 16S ribosomal RNA.</text>
</comment>
<comment type="similarity">
    <text evidence="1">Belongs to the bacterial ribosomal protein bS20 family.</text>
</comment>
<gene>
    <name evidence="1" type="primary">rpsT</name>
    <name type="ordered locus">BLD_0583</name>
</gene>